<protein>
    <recommendedName>
        <fullName evidence="1">tRNA N6-adenosine threonylcarbamoyltransferase</fullName>
        <ecNumber evidence="1">2.3.1.234</ecNumber>
    </recommendedName>
    <alternativeName>
        <fullName evidence="1">N6-L-threonylcarbamoyladenine synthase</fullName>
        <shortName evidence="1">t(6)A synthase</shortName>
    </alternativeName>
    <alternativeName>
        <fullName evidence="1">t(6)A37 threonylcarbamoyladenosine biosynthesis protein TsaD</fullName>
    </alternativeName>
    <alternativeName>
        <fullName evidence="1">tRNA threonylcarbamoyladenosine biosynthesis protein TsaD</fullName>
    </alternativeName>
</protein>
<reference key="1">
    <citation type="journal article" date="2004" name="Nucleic Acids Res.">
        <title>Comparative analysis of the Borrelia garinii genome.</title>
        <authorList>
            <person name="Gloeckner G."/>
            <person name="Lehmann R."/>
            <person name="Romualdi A."/>
            <person name="Pradella S."/>
            <person name="Schulte-Spechtel U."/>
            <person name="Schilhabel M."/>
            <person name="Wilske B."/>
            <person name="Suehnel J."/>
            <person name="Platzer M."/>
        </authorList>
    </citation>
    <scope>NUCLEOTIDE SEQUENCE [LARGE SCALE GENOMIC DNA]</scope>
    <source>
        <strain>ATCC BAA-2496 / DSM 23469 / PBi</strain>
    </source>
</reference>
<dbReference type="EC" id="2.3.1.234" evidence="1"/>
<dbReference type="EMBL" id="CP000013">
    <property type="protein sequence ID" value="AAU07615.1"/>
    <property type="molecule type" value="Genomic_DNA"/>
</dbReference>
<dbReference type="SMR" id="Q660A6"/>
<dbReference type="KEGG" id="bga:BG0792"/>
<dbReference type="eggNOG" id="COG0533">
    <property type="taxonomic scope" value="Bacteria"/>
</dbReference>
<dbReference type="HOGENOM" id="CLU_023208_0_2_12"/>
<dbReference type="OrthoDB" id="9806197at2"/>
<dbReference type="Proteomes" id="UP000002276">
    <property type="component" value="Chromosome"/>
</dbReference>
<dbReference type="GO" id="GO:0005737">
    <property type="term" value="C:cytoplasm"/>
    <property type="evidence" value="ECO:0007669"/>
    <property type="project" value="UniProtKB-SubCell"/>
</dbReference>
<dbReference type="GO" id="GO:0005506">
    <property type="term" value="F:iron ion binding"/>
    <property type="evidence" value="ECO:0007669"/>
    <property type="project" value="UniProtKB-UniRule"/>
</dbReference>
<dbReference type="GO" id="GO:0061711">
    <property type="term" value="F:N(6)-L-threonylcarbamoyladenine synthase activity"/>
    <property type="evidence" value="ECO:0007669"/>
    <property type="project" value="UniProtKB-EC"/>
</dbReference>
<dbReference type="GO" id="GO:0002949">
    <property type="term" value="P:tRNA threonylcarbamoyladenosine modification"/>
    <property type="evidence" value="ECO:0007669"/>
    <property type="project" value="UniProtKB-UniRule"/>
</dbReference>
<dbReference type="CDD" id="cd24133">
    <property type="entry name" value="ASKHA_NBD_TsaD_bac"/>
    <property type="match status" value="1"/>
</dbReference>
<dbReference type="FunFam" id="3.30.420.40:FF:000040">
    <property type="entry name" value="tRNA N6-adenosine threonylcarbamoyltransferase"/>
    <property type="match status" value="1"/>
</dbReference>
<dbReference type="Gene3D" id="3.30.420.40">
    <property type="match status" value="2"/>
</dbReference>
<dbReference type="HAMAP" id="MF_01445">
    <property type="entry name" value="TsaD"/>
    <property type="match status" value="1"/>
</dbReference>
<dbReference type="InterPro" id="IPR043129">
    <property type="entry name" value="ATPase_NBD"/>
</dbReference>
<dbReference type="InterPro" id="IPR000905">
    <property type="entry name" value="Gcp-like_dom"/>
</dbReference>
<dbReference type="InterPro" id="IPR017861">
    <property type="entry name" value="KAE1/TsaD"/>
</dbReference>
<dbReference type="InterPro" id="IPR017860">
    <property type="entry name" value="Peptidase_M22_CS"/>
</dbReference>
<dbReference type="InterPro" id="IPR022450">
    <property type="entry name" value="TsaD"/>
</dbReference>
<dbReference type="NCBIfam" id="TIGR00329">
    <property type="entry name" value="gcp_kae1"/>
    <property type="match status" value="1"/>
</dbReference>
<dbReference type="NCBIfam" id="TIGR03723">
    <property type="entry name" value="T6A_TsaD_YgjD"/>
    <property type="match status" value="1"/>
</dbReference>
<dbReference type="PANTHER" id="PTHR11735">
    <property type="entry name" value="TRNA N6-ADENOSINE THREONYLCARBAMOYLTRANSFERASE"/>
    <property type="match status" value="1"/>
</dbReference>
<dbReference type="PANTHER" id="PTHR11735:SF6">
    <property type="entry name" value="TRNA N6-ADENOSINE THREONYLCARBAMOYLTRANSFERASE, MITOCHONDRIAL"/>
    <property type="match status" value="1"/>
</dbReference>
<dbReference type="Pfam" id="PF00814">
    <property type="entry name" value="TsaD"/>
    <property type="match status" value="1"/>
</dbReference>
<dbReference type="PRINTS" id="PR00789">
    <property type="entry name" value="OSIALOPTASE"/>
</dbReference>
<dbReference type="SUPFAM" id="SSF53067">
    <property type="entry name" value="Actin-like ATPase domain"/>
    <property type="match status" value="2"/>
</dbReference>
<dbReference type="PROSITE" id="PS01016">
    <property type="entry name" value="GLYCOPROTEASE"/>
    <property type="match status" value="1"/>
</dbReference>
<accession>Q660A6</accession>
<evidence type="ECO:0000255" key="1">
    <source>
        <dbReference type="HAMAP-Rule" id="MF_01445"/>
    </source>
</evidence>
<keyword id="KW-0012">Acyltransferase</keyword>
<keyword id="KW-0963">Cytoplasm</keyword>
<keyword id="KW-0408">Iron</keyword>
<keyword id="KW-0479">Metal-binding</keyword>
<keyword id="KW-0808">Transferase</keyword>
<keyword id="KW-0819">tRNA processing</keyword>
<comment type="function">
    <text evidence="1">Required for the formation of a threonylcarbamoyl group on adenosine at position 37 (t(6)A37) in tRNAs that read codons beginning with adenine. Is involved in the transfer of the threonylcarbamoyl moiety of threonylcarbamoyl-AMP (TC-AMP) to the N6 group of A37, together with TsaE and TsaB. TsaD likely plays a direct catalytic role in this reaction.</text>
</comment>
<comment type="catalytic activity">
    <reaction evidence="1">
        <text>L-threonylcarbamoyladenylate + adenosine(37) in tRNA = N(6)-L-threonylcarbamoyladenosine(37) in tRNA + AMP + H(+)</text>
        <dbReference type="Rhea" id="RHEA:37059"/>
        <dbReference type="Rhea" id="RHEA-COMP:10162"/>
        <dbReference type="Rhea" id="RHEA-COMP:10163"/>
        <dbReference type="ChEBI" id="CHEBI:15378"/>
        <dbReference type="ChEBI" id="CHEBI:73682"/>
        <dbReference type="ChEBI" id="CHEBI:74411"/>
        <dbReference type="ChEBI" id="CHEBI:74418"/>
        <dbReference type="ChEBI" id="CHEBI:456215"/>
        <dbReference type="EC" id="2.3.1.234"/>
    </reaction>
</comment>
<comment type="cofactor">
    <cofactor evidence="1">
        <name>Fe(2+)</name>
        <dbReference type="ChEBI" id="CHEBI:29033"/>
    </cofactor>
    <text evidence="1">Binds 1 Fe(2+) ion per subunit.</text>
</comment>
<comment type="subcellular location">
    <subcellularLocation>
        <location evidence="1">Cytoplasm</location>
    </subcellularLocation>
</comment>
<comment type="similarity">
    <text evidence="1">Belongs to the KAE1 / TsaD family.</text>
</comment>
<organism>
    <name type="scientific">Borrelia garinii subsp. bavariensis (strain ATCC BAA-2496 / DSM 23469 / PBi)</name>
    <name type="common">Borreliella bavariensis</name>
    <dbReference type="NCBI Taxonomy" id="290434"/>
    <lineage>
        <taxon>Bacteria</taxon>
        <taxon>Pseudomonadati</taxon>
        <taxon>Spirochaetota</taxon>
        <taxon>Spirochaetia</taxon>
        <taxon>Spirochaetales</taxon>
        <taxon>Borreliaceae</taxon>
        <taxon>Borreliella</taxon>
    </lineage>
</organism>
<sequence>MKVLGIETSCDDCCIAVVENGIHILSNIKLNQKEHKKYYGVVPEIASRLHTEAIMSVCIKALKKANTKISEIDLIAVTSRPGLIGSLIVGLNFAKGLAISLKKPIICIDHILAHLYAPLMSSKIEYPFISLLLSGGHTLIAKQKNFDDVEILGKTLDDSCGEAFDKVAKHYNMGFPGGPNIEQISKNGDENTFKFPVTTFRKKENWYDFSYSGLKTACIHQLEKFKSKDNPTTKNNIAASFQKAAFENLITPLRRAIKDTQINKLVIAGGVASNLYLREKINKLKIQTYYPPLDLCTDNGAMIAGLGFNMYLKYGESPIETDVNSRIENYKNQYRRRK</sequence>
<proteinExistence type="inferred from homology"/>
<gene>
    <name evidence="1" type="primary">tsaD</name>
    <name type="synonym">gcp</name>
    <name type="ordered locus">BG0792</name>
</gene>
<name>TSAD_BORGP</name>
<feature type="chain" id="PRO_0000303289" description="tRNA N6-adenosine threonylcarbamoyltransferase">
    <location>
        <begin position="1"/>
        <end position="338"/>
    </location>
</feature>
<feature type="binding site" evidence="1">
    <location>
        <position position="110"/>
    </location>
    <ligand>
        <name>Fe cation</name>
        <dbReference type="ChEBI" id="CHEBI:24875"/>
    </ligand>
</feature>
<feature type="binding site" evidence="1">
    <location>
        <position position="114"/>
    </location>
    <ligand>
        <name>Fe cation</name>
        <dbReference type="ChEBI" id="CHEBI:24875"/>
    </ligand>
</feature>
<feature type="binding site" evidence="1">
    <location>
        <begin position="132"/>
        <end position="136"/>
    </location>
    <ligand>
        <name>substrate</name>
    </ligand>
</feature>
<feature type="binding site" evidence="1">
    <location>
        <position position="165"/>
    </location>
    <ligand>
        <name>substrate</name>
    </ligand>
</feature>
<feature type="binding site" evidence="1">
    <location>
        <position position="178"/>
    </location>
    <ligand>
        <name>substrate</name>
    </ligand>
</feature>
<feature type="binding site" evidence="1">
    <location>
        <position position="274"/>
    </location>
    <ligand>
        <name>substrate</name>
    </ligand>
</feature>
<feature type="binding site" evidence="1">
    <location>
        <position position="298"/>
    </location>
    <ligand>
        <name>Fe cation</name>
        <dbReference type="ChEBI" id="CHEBI:24875"/>
    </ligand>
</feature>